<feature type="chain" id="PRO_0000051858" description="Leukotriene-B4 omega-hydroxylase 3">
    <location>
        <begin position="1"/>
        <end position="524"/>
    </location>
</feature>
<feature type="binding site" description="covalent" evidence="2">
    <location>
        <position position="328"/>
    </location>
    <ligand>
        <name>heme</name>
        <dbReference type="ChEBI" id="CHEBI:30413"/>
    </ligand>
</feature>
<feature type="binding site" description="axial binding residue" evidence="2">
    <location>
        <position position="468"/>
    </location>
    <ligand>
        <name>heme</name>
        <dbReference type="ChEBI" id="CHEBI:30413"/>
    </ligand>
    <ligandPart>
        <name>Fe</name>
        <dbReference type="ChEBI" id="CHEBI:18248"/>
    </ligandPart>
</feature>
<dbReference type="EC" id="1.14.14.94"/>
<dbReference type="EMBL" id="AB037541">
    <property type="protein sequence ID" value="BAB12564.1"/>
    <property type="molecule type" value="mRNA"/>
</dbReference>
<dbReference type="EMBL" id="AB037540">
    <property type="protein sequence ID" value="BAB12563.1"/>
    <property type="molecule type" value="mRNA"/>
</dbReference>
<dbReference type="EMBL" id="AF233644">
    <property type="protein sequence ID" value="AAK15010.1"/>
    <property type="molecule type" value="mRNA"/>
</dbReference>
<dbReference type="EMBL" id="AK005007">
    <property type="protein sequence ID" value="BAB23740.1"/>
    <property type="molecule type" value="mRNA"/>
</dbReference>
<dbReference type="EMBL" id="AK018676">
    <property type="protein sequence ID" value="BAB31338.1"/>
    <property type="molecule type" value="mRNA"/>
</dbReference>
<dbReference type="EMBL" id="BC011228">
    <property type="protein sequence ID" value="AAH11228.1"/>
    <property type="molecule type" value="mRNA"/>
</dbReference>
<dbReference type="EMBL" id="BC094016">
    <property type="protein sequence ID" value="AAH94016.1"/>
    <property type="molecule type" value="mRNA"/>
</dbReference>
<dbReference type="CCDS" id="CCDS28621.1"/>
<dbReference type="RefSeq" id="NP_001191262.1">
    <property type="nucleotide sequence ID" value="NM_001204333.1"/>
</dbReference>
<dbReference type="RefSeq" id="NP_001191263.1">
    <property type="nucleotide sequence ID" value="NM_001204334.1"/>
</dbReference>
<dbReference type="RefSeq" id="NP_001191264.1">
    <property type="nucleotide sequence ID" value="NM_001204335.1"/>
</dbReference>
<dbReference type="RefSeq" id="NP_001191265.1">
    <property type="nucleotide sequence ID" value="NM_001204336.1"/>
</dbReference>
<dbReference type="RefSeq" id="NP_001344717.1">
    <property type="nucleotide sequence ID" value="NM_001357788.1"/>
</dbReference>
<dbReference type="RefSeq" id="NP_071879.1">
    <property type="nucleotide sequence ID" value="NM_022434.2"/>
</dbReference>
<dbReference type="RefSeq" id="XP_006524845.1">
    <property type="nucleotide sequence ID" value="XM_006524782.3"/>
</dbReference>
<dbReference type="RefSeq" id="XP_030105833.1">
    <property type="nucleotide sequence ID" value="XM_030249973.2"/>
</dbReference>
<dbReference type="SMR" id="Q9EP75"/>
<dbReference type="FunCoup" id="Q9EP75">
    <property type="interactions" value="503"/>
</dbReference>
<dbReference type="STRING" id="10090.ENSMUSP00000050478"/>
<dbReference type="iPTMnet" id="Q9EP75"/>
<dbReference type="PhosphoSitePlus" id="Q9EP75"/>
<dbReference type="SwissPalm" id="Q9EP75"/>
<dbReference type="jPOST" id="Q9EP75"/>
<dbReference type="PaxDb" id="10090-ENSMUSP00000050478"/>
<dbReference type="PeptideAtlas" id="Q9EP75"/>
<dbReference type="ProteomicsDB" id="284155"/>
<dbReference type="Pumba" id="Q9EP75"/>
<dbReference type="DNASU" id="64385"/>
<dbReference type="Ensembl" id="ENSMUST00000054174.9">
    <property type="protein sequence ID" value="ENSMUSP00000050478.7"/>
    <property type="gene ID" value="ENSMUSG00000024292.16"/>
</dbReference>
<dbReference type="Ensembl" id="ENSMUST00000179434.8">
    <property type="protein sequence ID" value="ENSMUSP00000136139.2"/>
    <property type="gene ID" value="ENSMUSG00000024292.16"/>
</dbReference>
<dbReference type="Ensembl" id="ENSMUST00000234759.2">
    <property type="protein sequence ID" value="ENSMUSP00000157036.2"/>
    <property type="gene ID" value="ENSMUSG00000024292.16"/>
</dbReference>
<dbReference type="Ensembl" id="ENSMUST00000235058.2">
    <property type="protein sequence ID" value="ENSMUSP00000157006.2"/>
    <property type="gene ID" value="ENSMUSG00000024292.16"/>
</dbReference>
<dbReference type="GeneID" id="64385"/>
<dbReference type="KEGG" id="mmu:64385"/>
<dbReference type="UCSC" id="uc008bxq.2">
    <property type="organism name" value="mouse"/>
</dbReference>
<dbReference type="AGR" id="MGI:1927669"/>
<dbReference type="CTD" id="64385"/>
<dbReference type="MGI" id="MGI:1927669">
    <property type="gene designation" value="Cyp4f14"/>
</dbReference>
<dbReference type="VEuPathDB" id="HostDB:ENSMUSG00000024292"/>
<dbReference type="eggNOG" id="KOG0157">
    <property type="taxonomic scope" value="Eukaryota"/>
</dbReference>
<dbReference type="GeneTree" id="ENSGT00940000154646"/>
<dbReference type="HOGENOM" id="CLU_001570_5_1_1"/>
<dbReference type="InParanoid" id="Q9EP75"/>
<dbReference type="OMA" id="IDVQKWM"/>
<dbReference type="OrthoDB" id="1470350at2759"/>
<dbReference type="PhylomeDB" id="Q9EP75"/>
<dbReference type="TreeFam" id="TF105088"/>
<dbReference type="BRENDA" id="1.14.14.94">
    <property type="organism ID" value="3474"/>
</dbReference>
<dbReference type="Reactome" id="R-MMU-211935">
    <property type="pathway name" value="Fatty acids"/>
</dbReference>
<dbReference type="Reactome" id="R-MMU-211958">
    <property type="pathway name" value="Miscellaneous substrates"/>
</dbReference>
<dbReference type="Reactome" id="R-MMU-211979">
    <property type="pathway name" value="Eicosanoids"/>
</dbReference>
<dbReference type="Reactome" id="R-MMU-2142691">
    <property type="pathway name" value="Synthesis of Leukotrienes (LT) and Eoxins (EX)"/>
</dbReference>
<dbReference type="UniPathway" id="UPA00883"/>
<dbReference type="BioGRID-ORCS" id="64385">
    <property type="hits" value="4 hits in 80 CRISPR screens"/>
</dbReference>
<dbReference type="ChiTaRS" id="Cyp4f14">
    <property type="organism name" value="mouse"/>
</dbReference>
<dbReference type="PRO" id="PR:Q9EP75"/>
<dbReference type="Proteomes" id="UP000000589">
    <property type="component" value="Chromosome 17"/>
</dbReference>
<dbReference type="RNAct" id="Q9EP75">
    <property type="molecule type" value="protein"/>
</dbReference>
<dbReference type="Bgee" id="ENSMUSG00000024292">
    <property type="expression patterns" value="Expressed in small intestine Peyer's patch and 47 other cell types or tissues"/>
</dbReference>
<dbReference type="ExpressionAtlas" id="Q9EP75">
    <property type="expression patterns" value="baseline and differential"/>
</dbReference>
<dbReference type="GO" id="GO:0005789">
    <property type="term" value="C:endoplasmic reticulum membrane"/>
    <property type="evidence" value="ECO:0007669"/>
    <property type="project" value="UniProtKB-SubCell"/>
</dbReference>
<dbReference type="GO" id="GO:0020037">
    <property type="term" value="F:heme binding"/>
    <property type="evidence" value="ECO:0007669"/>
    <property type="project" value="InterPro"/>
</dbReference>
<dbReference type="GO" id="GO:0005506">
    <property type="term" value="F:iron ion binding"/>
    <property type="evidence" value="ECO:0007669"/>
    <property type="project" value="InterPro"/>
</dbReference>
<dbReference type="GO" id="GO:0050051">
    <property type="term" value="F:leukotriene-B4 20-monooxygenase activity"/>
    <property type="evidence" value="ECO:0007669"/>
    <property type="project" value="UniProtKB-EC"/>
</dbReference>
<dbReference type="CDD" id="cd20679">
    <property type="entry name" value="CYP4F"/>
    <property type="match status" value="1"/>
</dbReference>
<dbReference type="FunFam" id="1.10.630.10:FF:000005">
    <property type="entry name" value="cytochrome P450 4F22 isoform X2"/>
    <property type="match status" value="1"/>
</dbReference>
<dbReference type="Gene3D" id="1.10.630.10">
    <property type="entry name" value="Cytochrome P450"/>
    <property type="match status" value="1"/>
</dbReference>
<dbReference type="InterPro" id="IPR001128">
    <property type="entry name" value="Cyt_P450"/>
</dbReference>
<dbReference type="InterPro" id="IPR017972">
    <property type="entry name" value="Cyt_P450_CS"/>
</dbReference>
<dbReference type="InterPro" id="IPR002401">
    <property type="entry name" value="Cyt_P450_E_grp-I"/>
</dbReference>
<dbReference type="InterPro" id="IPR036396">
    <property type="entry name" value="Cyt_P450_sf"/>
</dbReference>
<dbReference type="InterPro" id="IPR050196">
    <property type="entry name" value="Cytochrome_P450_Monoox"/>
</dbReference>
<dbReference type="PANTHER" id="PTHR24291">
    <property type="entry name" value="CYTOCHROME P450 FAMILY 4"/>
    <property type="match status" value="1"/>
</dbReference>
<dbReference type="PANTHER" id="PTHR24291:SF190">
    <property type="entry name" value="LEUKOTRIENE-B4 OMEGA-HYDROXYLASE 3"/>
    <property type="match status" value="1"/>
</dbReference>
<dbReference type="Pfam" id="PF00067">
    <property type="entry name" value="p450"/>
    <property type="match status" value="1"/>
</dbReference>
<dbReference type="PRINTS" id="PR00463">
    <property type="entry name" value="EP450I"/>
</dbReference>
<dbReference type="PRINTS" id="PR00385">
    <property type="entry name" value="P450"/>
</dbReference>
<dbReference type="SUPFAM" id="SSF48264">
    <property type="entry name" value="Cytochrome P450"/>
    <property type="match status" value="1"/>
</dbReference>
<dbReference type="PROSITE" id="PS00086">
    <property type="entry name" value="CYTOCHROME_P450"/>
    <property type="match status" value="1"/>
</dbReference>
<keyword id="KW-0256">Endoplasmic reticulum</keyword>
<keyword id="KW-0349">Heme</keyword>
<keyword id="KW-0408">Iron</keyword>
<keyword id="KW-0472">Membrane</keyword>
<keyword id="KW-0479">Metal-binding</keyword>
<keyword id="KW-0492">Microsome</keyword>
<keyword id="KW-0503">Monooxygenase</keyword>
<keyword id="KW-0560">Oxidoreductase</keyword>
<keyword id="KW-1185">Reference proteome</keyword>
<name>CP4FE_MOUSE</name>
<proteinExistence type="evidence at protein level"/>
<reference key="1">
    <citation type="submission" date="2000-01" db="EMBL/GenBank/DDBJ databases">
        <title>Mouse liver leukotriene B4 omega-hydroxylase.</title>
        <authorList>
            <person name="Kikuta Y."/>
            <person name="Kasyu H."/>
            <person name="Kusunose E."/>
            <person name="Kusunose M."/>
        </authorList>
    </citation>
    <scope>NUCLEOTIDE SEQUENCE [MRNA]</scope>
    <source>
        <strain>C57BL/6J</strain>
        <tissue>Liver</tissue>
    </source>
</reference>
<reference key="2">
    <citation type="submission" date="2000-02" db="EMBL/GenBank/DDBJ databases">
        <title>Protein expression and catalytic activity assessment of mouse 4F clones.</title>
        <authorList>
            <person name="Antonovic L."/>
            <person name="Kawashima H."/>
            <person name="Strobel H."/>
        </authorList>
    </citation>
    <scope>NUCLEOTIDE SEQUENCE [MRNA]</scope>
    <source>
        <strain>129/Sv</strain>
        <tissue>Brain</tissue>
    </source>
</reference>
<reference key="3">
    <citation type="journal article" date="2005" name="Science">
        <title>The transcriptional landscape of the mammalian genome.</title>
        <authorList>
            <person name="Carninci P."/>
            <person name="Kasukawa T."/>
            <person name="Katayama S."/>
            <person name="Gough J."/>
            <person name="Frith M.C."/>
            <person name="Maeda N."/>
            <person name="Oyama R."/>
            <person name="Ravasi T."/>
            <person name="Lenhard B."/>
            <person name="Wells C."/>
            <person name="Kodzius R."/>
            <person name="Shimokawa K."/>
            <person name="Bajic V.B."/>
            <person name="Brenner S.E."/>
            <person name="Batalov S."/>
            <person name="Forrest A.R."/>
            <person name="Zavolan M."/>
            <person name="Davis M.J."/>
            <person name="Wilming L.G."/>
            <person name="Aidinis V."/>
            <person name="Allen J.E."/>
            <person name="Ambesi-Impiombato A."/>
            <person name="Apweiler R."/>
            <person name="Aturaliya R.N."/>
            <person name="Bailey T.L."/>
            <person name="Bansal M."/>
            <person name="Baxter L."/>
            <person name="Beisel K.W."/>
            <person name="Bersano T."/>
            <person name="Bono H."/>
            <person name="Chalk A.M."/>
            <person name="Chiu K.P."/>
            <person name="Choudhary V."/>
            <person name="Christoffels A."/>
            <person name="Clutterbuck D.R."/>
            <person name="Crowe M.L."/>
            <person name="Dalla E."/>
            <person name="Dalrymple B.P."/>
            <person name="de Bono B."/>
            <person name="Della Gatta G."/>
            <person name="di Bernardo D."/>
            <person name="Down T."/>
            <person name="Engstrom P."/>
            <person name="Fagiolini M."/>
            <person name="Faulkner G."/>
            <person name="Fletcher C.F."/>
            <person name="Fukushima T."/>
            <person name="Furuno M."/>
            <person name="Futaki S."/>
            <person name="Gariboldi M."/>
            <person name="Georgii-Hemming P."/>
            <person name="Gingeras T.R."/>
            <person name="Gojobori T."/>
            <person name="Green R.E."/>
            <person name="Gustincich S."/>
            <person name="Harbers M."/>
            <person name="Hayashi Y."/>
            <person name="Hensch T.K."/>
            <person name="Hirokawa N."/>
            <person name="Hill D."/>
            <person name="Huminiecki L."/>
            <person name="Iacono M."/>
            <person name="Ikeo K."/>
            <person name="Iwama A."/>
            <person name="Ishikawa T."/>
            <person name="Jakt M."/>
            <person name="Kanapin A."/>
            <person name="Katoh M."/>
            <person name="Kawasawa Y."/>
            <person name="Kelso J."/>
            <person name="Kitamura H."/>
            <person name="Kitano H."/>
            <person name="Kollias G."/>
            <person name="Krishnan S.P."/>
            <person name="Kruger A."/>
            <person name="Kummerfeld S.K."/>
            <person name="Kurochkin I.V."/>
            <person name="Lareau L.F."/>
            <person name="Lazarevic D."/>
            <person name="Lipovich L."/>
            <person name="Liu J."/>
            <person name="Liuni S."/>
            <person name="McWilliam S."/>
            <person name="Madan Babu M."/>
            <person name="Madera M."/>
            <person name="Marchionni L."/>
            <person name="Matsuda H."/>
            <person name="Matsuzawa S."/>
            <person name="Miki H."/>
            <person name="Mignone F."/>
            <person name="Miyake S."/>
            <person name="Morris K."/>
            <person name="Mottagui-Tabar S."/>
            <person name="Mulder N."/>
            <person name="Nakano N."/>
            <person name="Nakauchi H."/>
            <person name="Ng P."/>
            <person name="Nilsson R."/>
            <person name="Nishiguchi S."/>
            <person name="Nishikawa S."/>
            <person name="Nori F."/>
            <person name="Ohara O."/>
            <person name="Okazaki Y."/>
            <person name="Orlando V."/>
            <person name="Pang K.C."/>
            <person name="Pavan W.J."/>
            <person name="Pavesi G."/>
            <person name="Pesole G."/>
            <person name="Petrovsky N."/>
            <person name="Piazza S."/>
            <person name="Reed J."/>
            <person name="Reid J.F."/>
            <person name="Ring B.Z."/>
            <person name="Ringwald M."/>
            <person name="Rost B."/>
            <person name="Ruan Y."/>
            <person name="Salzberg S.L."/>
            <person name="Sandelin A."/>
            <person name="Schneider C."/>
            <person name="Schoenbach C."/>
            <person name="Sekiguchi K."/>
            <person name="Semple C.A."/>
            <person name="Seno S."/>
            <person name="Sessa L."/>
            <person name="Sheng Y."/>
            <person name="Shibata Y."/>
            <person name="Shimada H."/>
            <person name="Shimada K."/>
            <person name="Silva D."/>
            <person name="Sinclair B."/>
            <person name="Sperling S."/>
            <person name="Stupka E."/>
            <person name="Sugiura K."/>
            <person name="Sultana R."/>
            <person name="Takenaka Y."/>
            <person name="Taki K."/>
            <person name="Tammoja K."/>
            <person name="Tan S.L."/>
            <person name="Tang S."/>
            <person name="Taylor M.S."/>
            <person name="Tegner J."/>
            <person name="Teichmann S.A."/>
            <person name="Ueda H.R."/>
            <person name="van Nimwegen E."/>
            <person name="Verardo R."/>
            <person name="Wei C.L."/>
            <person name="Yagi K."/>
            <person name="Yamanishi H."/>
            <person name="Zabarovsky E."/>
            <person name="Zhu S."/>
            <person name="Zimmer A."/>
            <person name="Hide W."/>
            <person name="Bult C."/>
            <person name="Grimmond S.M."/>
            <person name="Teasdale R.D."/>
            <person name="Liu E.T."/>
            <person name="Brusic V."/>
            <person name="Quackenbush J."/>
            <person name="Wahlestedt C."/>
            <person name="Mattick J.S."/>
            <person name="Hume D.A."/>
            <person name="Kai C."/>
            <person name="Sasaki D."/>
            <person name="Tomaru Y."/>
            <person name="Fukuda S."/>
            <person name="Kanamori-Katayama M."/>
            <person name="Suzuki M."/>
            <person name="Aoki J."/>
            <person name="Arakawa T."/>
            <person name="Iida J."/>
            <person name="Imamura K."/>
            <person name="Itoh M."/>
            <person name="Kato T."/>
            <person name="Kawaji H."/>
            <person name="Kawagashira N."/>
            <person name="Kawashima T."/>
            <person name="Kojima M."/>
            <person name="Kondo S."/>
            <person name="Konno H."/>
            <person name="Nakano K."/>
            <person name="Ninomiya N."/>
            <person name="Nishio T."/>
            <person name="Okada M."/>
            <person name="Plessy C."/>
            <person name="Shibata K."/>
            <person name="Shiraki T."/>
            <person name="Suzuki S."/>
            <person name="Tagami M."/>
            <person name="Waki K."/>
            <person name="Watahiki A."/>
            <person name="Okamura-Oho Y."/>
            <person name="Suzuki H."/>
            <person name="Kawai J."/>
            <person name="Hayashizaki Y."/>
        </authorList>
    </citation>
    <scope>NUCLEOTIDE SEQUENCE [LARGE SCALE MRNA]</scope>
    <source>
        <strain>C57BL/6J</strain>
        <tissue>Cecum</tissue>
        <tissue>Liver</tissue>
    </source>
</reference>
<reference key="4">
    <citation type="journal article" date="2004" name="Genome Res.">
        <title>The status, quality, and expansion of the NIH full-length cDNA project: the Mammalian Gene Collection (MGC).</title>
        <authorList>
            <consortium name="The MGC Project Team"/>
        </authorList>
    </citation>
    <scope>NUCLEOTIDE SEQUENCE [LARGE SCALE MRNA]</scope>
    <source>
        <strain>FVB/N</strain>
        <tissue>Liver</tissue>
    </source>
</reference>
<reference key="5">
    <citation type="journal article" date="2010" name="Cell">
        <title>A tissue-specific atlas of mouse protein phosphorylation and expression.</title>
        <authorList>
            <person name="Huttlin E.L."/>
            <person name="Jedrychowski M.P."/>
            <person name="Elias J.E."/>
            <person name="Goswami T."/>
            <person name="Rad R."/>
            <person name="Beausoleil S.A."/>
            <person name="Villen J."/>
            <person name="Haas W."/>
            <person name="Sowa M.E."/>
            <person name="Gygi S.P."/>
        </authorList>
    </citation>
    <scope>IDENTIFICATION BY MASS SPECTROMETRY [LARGE SCALE ANALYSIS]</scope>
    <source>
        <tissue>Liver</tissue>
    </source>
</reference>
<accession>Q9EP75</accession>
<accession>Q52L93</accession>
<sequence length="524" mass="59800">MSQLSLSWLGLGPEVAFPWKTLLLLGASWILARILIQIYAAYRNYRHLHGFPQPPKRNWLMGHVGMVTPTEQGLKELTRLVGTYPQGFLMWIGPMVPVITLCHSDIVRSILNASAAVALKDVIFYSILKPWLGDGLLVSAGDKWSRHRRMLTPAFHFNILKPYVKIFNDSTNIMHAKWQRLISDGSARLDMFEHVSLMTLDSLQKCVFSFDSNCQEKSSEYIAAILELSALVAKRHQQPLMFMDLLYNLTPDGMRFRKACNVVHEFTDAVIRERHRTLPDQGLDDFLKSKAKSKTLDFIDVLLLSKDEDGKELSDEDIRAEADTFMFEGHDTTASGLSWILYNLARHPEYQERCRQEVQELLRGREPEEIEWDDLAQLPFLTMCIKESLRLHPPVTVISRCCTQDILLPDGRTIPKGIICLISIFGIHHNPSVWPDPEVYDPFRFDPENIKDSSPLAFIPFSAGPRNCIGQTFAMSEMKVALALTLLRFRLLPDDKEPRRQPELILRAEGGLWLRVEPLSAGAH</sequence>
<protein>
    <recommendedName>
        <fullName>Leukotriene-B4 omega-hydroxylase 3</fullName>
        <ecNumber>1.14.14.94</ecNumber>
    </recommendedName>
    <alternativeName>
        <fullName>Cyp4f-14</fullName>
    </alternativeName>
    <alternativeName>
        <fullName>Cytochrome P450 4F14</fullName>
    </alternativeName>
    <alternativeName>
        <fullName>Cytochrome P450-LTB-omega</fullName>
    </alternativeName>
    <alternativeName>
        <fullName>Leukotriene-B4 20-monooxygenase 3</fullName>
    </alternativeName>
</protein>
<organism>
    <name type="scientific">Mus musculus</name>
    <name type="common">Mouse</name>
    <dbReference type="NCBI Taxonomy" id="10090"/>
    <lineage>
        <taxon>Eukaryota</taxon>
        <taxon>Metazoa</taxon>
        <taxon>Chordata</taxon>
        <taxon>Craniata</taxon>
        <taxon>Vertebrata</taxon>
        <taxon>Euteleostomi</taxon>
        <taxon>Mammalia</taxon>
        <taxon>Eutheria</taxon>
        <taxon>Euarchontoglires</taxon>
        <taxon>Glires</taxon>
        <taxon>Rodentia</taxon>
        <taxon>Myomorpha</taxon>
        <taxon>Muroidea</taxon>
        <taxon>Muridae</taxon>
        <taxon>Murinae</taxon>
        <taxon>Mus</taxon>
        <taxon>Mus</taxon>
    </lineage>
</organism>
<comment type="function">
    <text evidence="1">Cytochromes P450 are a group of heme-thiolate monooxygenases. Catalyzes the omega-hydroxylation of LTB4 (By similarity).</text>
</comment>
<comment type="catalytic activity">
    <reaction evidence="3">
        <text>leukotriene B4 + reduced [NADPH--hemoprotein reductase] + O2 = 20-hydroxy-leukotriene B4 + oxidized [NADPH--hemoprotein reductase] + H2O + H(+)</text>
        <dbReference type="Rhea" id="RHEA:22176"/>
        <dbReference type="Rhea" id="RHEA-COMP:11964"/>
        <dbReference type="Rhea" id="RHEA-COMP:11965"/>
        <dbReference type="ChEBI" id="CHEBI:15377"/>
        <dbReference type="ChEBI" id="CHEBI:15378"/>
        <dbReference type="ChEBI" id="CHEBI:15379"/>
        <dbReference type="ChEBI" id="CHEBI:57460"/>
        <dbReference type="ChEBI" id="CHEBI:57461"/>
        <dbReference type="ChEBI" id="CHEBI:57618"/>
        <dbReference type="ChEBI" id="CHEBI:58210"/>
        <dbReference type="EC" id="1.14.14.94"/>
    </reaction>
</comment>
<comment type="cofactor">
    <cofactor evidence="2">
        <name>heme</name>
        <dbReference type="ChEBI" id="CHEBI:30413"/>
    </cofactor>
</comment>
<comment type="pathway">
    <text>Lipid metabolism; leukotriene B4 degradation.</text>
</comment>
<comment type="subcellular location">
    <subcellularLocation>
        <location evidence="1">Endoplasmic reticulum membrane</location>
        <topology evidence="1">Peripheral membrane protein</topology>
    </subcellularLocation>
    <subcellularLocation>
        <location evidence="1">Microsome membrane</location>
        <topology evidence="1">Peripheral membrane protein</topology>
    </subcellularLocation>
</comment>
<comment type="similarity">
    <text evidence="3">Belongs to the cytochrome P450 family.</text>
</comment>
<gene>
    <name type="primary">Cyp4f14</name>
</gene>
<evidence type="ECO:0000250" key="1"/>
<evidence type="ECO:0000250" key="2">
    <source>
        <dbReference type="UniProtKB" id="P51869"/>
    </source>
</evidence>
<evidence type="ECO:0000305" key="3"/>